<evidence type="ECO:0000255" key="1">
    <source>
        <dbReference type="HAMAP-Rule" id="MF_01380"/>
    </source>
</evidence>
<accession>B8F870</accession>
<comment type="function">
    <text evidence="1">Required for insertion of 4Fe-4S clusters for at least IspG.</text>
</comment>
<comment type="cofactor">
    <cofactor evidence="1">
        <name>iron-sulfur cluster</name>
        <dbReference type="ChEBI" id="CHEBI:30408"/>
    </cofactor>
    <text evidence="1">Binds 1 iron-sulfur cluster per subunit.</text>
</comment>
<comment type="subunit">
    <text evidence="1">Homodimer.</text>
</comment>
<comment type="similarity">
    <text evidence="1">Belongs to the HesB/IscA family.</text>
</comment>
<feature type="chain" id="PRO_1000184204" description="Iron-sulfur cluster insertion protein ErpA">
    <location>
        <begin position="1"/>
        <end position="113"/>
    </location>
</feature>
<feature type="binding site" evidence="1">
    <location>
        <position position="41"/>
    </location>
    <ligand>
        <name>iron-sulfur cluster</name>
        <dbReference type="ChEBI" id="CHEBI:30408"/>
    </ligand>
</feature>
<feature type="binding site" evidence="1">
    <location>
        <position position="105"/>
    </location>
    <ligand>
        <name>iron-sulfur cluster</name>
        <dbReference type="ChEBI" id="CHEBI:30408"/>
    </ligand>
</feature>
<feature type="binding site" evidence="1">
    <location>
        <position position="107"/>
    </location>
    <ligand>
        <name>iron-sulfur cluster</name>
        <dbReference type="ChEBI" id="CHEBI:30408"/>
    </ligand>
</feature>
<reference key="1">
    <citation type="journal article" date="2009" name="J. Bacteriol.">
        <title>Complete genome sequence of Haemophilus parasuis SH0165.</title>
        <authorList>
            <person name="Yue M."/>
            <person name="Yang F."/>
            <person name="Yang J."/>
            <person name="Bei W."/>
            <person name="Cai X."/>
            <person name="Chen L."/>
            <person name="Dong J."/>
            <person name="Zhou R."/>
            <person name="Jin M."/>
            <person name="Jin Q."/>
            <person name="Chen H."/>
        </authorList>
    </citation>
    <scope>NUCLEOTIDE SEQUENCE [LARGE SCALE GENOMIC DNA]</scope>
    <source>
        <strain>SH0165</strain>
    </source>
</reference>
<proteinExistence type="inferred from homology"/>
<name>ERPA_GLAP5</name>
<dbReference type="EMBL" id="CP001321">
    <property type="protein sequence ID" value="ACL33522.1"/>
    <property type="molecule type" value="Genomic_DNA"/>
</dbReference>
<dbReference type="RefSeq" id="WP_015940050.1">
    <property type="nucleotide sequence ID" value="NC_011852.1"/>
</dbReference>
<dbReference type="SMR" id="B8F870"/>
<dbReference type="STRING" id="557723.HAPS_2065"/>
<dbReference type="KEGG" id="hap:HAPS_2065"/>
<dbReference type="PATRIC" id="fig|557723.8.peg.2050"/>
<dbReference type="HOGENOM" id="CLU_069054_5_3_6"/>
<dbReference type="Proteomes" id="UP000006743">
    <property type="component" value="Chromosome"/>
</dbReference>
<dbReference type="GO" id="GO:0005829">
    <property type="term" value="C:cytosol"/>
    <property type="evidence" value="ECO:0007669"/>
    <property type="project" value="TreeGrafter"/>
</dbReference>
<dbReference type="GO" id="GO:0051537">
    <property type="term" value="F:2 iron, 2 sulfur cluster binding"/>
    <property type="evidence" value="ECO:0007669"/>
    <property type="project" value="TreeGrafter"/>
</dbReference>
<dbReference type="GO" id="GO:0051539">
    <property type="term" value="F:4 iron, 4 sulfur cluster binding"/>
    <property type="evidence" value="ECO:0007669"/>
    <property type="project" value="TreeGrafter"/>
</dbReference>
<dbReference type="GO" id="GO:0005506">
    <property type="term" value="F:iron ion binding"/>
    <property type="evidence" value="ECO:0007669"/>
    <property type="project" value="UniProtKB-UniRule"/>
</dbReference>
<dbReference type="GO" id="GO:0016226">
    <property type="term" value="P:iron-sulfur cluster assembly"/>
    <property type="evidence" value="ECO:0007669"/>
    <property type="project" value="UniProtKB-UniRule"/>
</dbReference>
<dbReference type="FunFam" id="2.60.300.12:FF:000002">
    <property type="entry name" value="Iron-sulfur cluster insertion protein ErpA"/>
    <property type="match status" value="1"/>
</dbReference>
<dbReference type="Gene3D" id="2.60.300.12">
    <property type="entry name" value="HesB-like domain"/>
    <property type="match status" value="1"/>
</dbReference>
<dbReference type="HAMAP" id="MF_01380">
    <property type="entry name" value="Fe_S_insert_ErpA"/>
    <property type="match status" value="1"/>
</dbReference>
<dbReference type="InterPro" id="IPR000361">
    <property type="entry name" value="FeS_biogenesis"/>
</dbReference>
<dbReference type="InterPro" id="IPR016092">
    <property type="entry name" value="FeS_cluster_insertion"/>
</dbReference>
<dbReference type="InterPro" id="IPR017870">
    <property type="entry name" value="FeS_cluster_insertion_CS"/>
</dbReference>
<dbReference type="InterPro" id="IPR023063">
    <property type="entry name" value="FeS_cluster_insertion_RrpA"/>
</dbReference>
<dbReference type="InterPro" id="IPR035903">
    <property type="entry name" value="HesB-like_dom_sf"/>
</dbReference>
<dbReference type="NCBIfam" id="TIGR00049">
    <property type="entry name" value="iron-sulfur cluster assembly accessory protein"/>
    <property type="match status" value="1"/>
</dbReference>
<dbReference type="NCBIfam" id="NF010147">
    <property type="entry name" value="PRK13623.1"/>
    <property type="match status" value="1"/>
</dbReference>
<dbReference type="PANTHER" id="PTHR43011">
    <property type="entry name" value="IRON-SULFUR CLUSTER ASSEMBLY 2 HOMOLOG, MITOCHONDRIAL"/>
    <property type="match status" value="1"/>
</dbReference>
<dbReference type="PANTHER" id="PTHR43011:SF1">
    <property type="entry name" value="IRON-SULFUR CLUSTER ASSEMBLY 2 HOMOLOG, MITOCHONDRIAL"/>
    <property type="match status" value="1"/>
</dbReference>
<dbReference type="Pfam" id="PF01521">
    <property type="entry name" value="Fe-S_biosyn"/>
    <property type="match status" value="1"/>
</dbReference>
<dbReference type="SUPFAM" id="SSF89360">
    <property type="entry name" value="HesB-like domain"/>
    <property type="match status" value="1"/>
</dbReference>
<dbReference type="PROSITE" id="PS01152">
    <property type="entry name" value="HESB"/>
    <property type="match status" value="1"/>
</dbReference>
<organism>
    <name type="scientific">Glaesserella parasuis serovar 5 (strain SH0165)</name>
    <name type="common">Haemophilus parasuis</name>
    <dbReference type="NCBI Taxonomy" id="557723"/>
    <lineage>
        <taxon>Bacteria</taxon>
        <taxon>Pseudomonadati</taxon>
        <taxon>Pseudomonadota</taxon>
        <taxon>Gammaproteobacteria</taxon>
        <taxon>Pasteurellales</taxon>
        <taxon>Pasteurellaceae</taxon>
        <taxon>Glaesserella</taxon>
    </lineage>
</organism>
<protein>
    <recommendedName>
        <fullName evidence="1">Iron-sulfur cluster insertion protein ErpA</fullName>
    </recommendedName>
</protein>
<sequence>MSDILVPLIFTDAAAKKVKFLIEGEENPELRLRVYITGGGCSGFQYGFTFDDKLNEGDLTIENLDVALVIDPMSLQYLIGATIDYVEGLDGSRFVVQNPNASSTCGCGASFSI</sequence>
<keyword id="KW-0408">Iron</keyword>
<keyword id="KW-0411">Iron-sulfur</keyword>
<keyword id="KW-0479">Metal-binding</keyword>
<keyword id="KW-1185">Reference proteome</keyword>
<gene>
    <name evidence="1" type="primary">erpA</name>
    <name type="ordered locus">HAPS_2065</name>
</gene>